<proteinExistence type="inferred from homology"/>
<protein>
    <recommendedName>
        <fullName evidence="1">Sulfate adenylyltransferase subunit 2</fullName>
        <ecNumber evidence="1">2.7.7.4</ecNumber>
    </recommendedName>
    <alternativeName>
        <fullName evidence="1">ATP-sulfurylase small subunit</fullName>
    </alternativeName>
    <alternativeName>
        <fullName evidence="1">Sulfate adenylate transferase</fullName>
        <shortName evidence="1">SAT</shortName>
    </alternativeName>
</protein>
<feature type="chain" id="PRO_1000008991" description="Sulfate adenylyltransferase subunit 2">
    <location>
        <begin position="1"/>
        <end position="302"/>
    </location>
</feature>
<feature type="region of interest" description="Disordered" evidence="2">
    <location>
        <begin position="280"/>
        <end position="302"/>
    </location>
</feature>
<organism>
    <name type="scientific">Shewanella sp. (strain MR-7)</name>
    <dbReference type="NCBI Taxonomy" id="60481"/>
    <lineage>
        <taxon>Bacteria</taxon>
        <taxon>Pseudomonadati</taxon>
        <taxon>Pseudomonadota</taxon>
        <taxon>Gammaproteobacteria</taxon>
        <taxon>Alteromonadales</taxon>
        <taxon>Shewanellaceae</taxon>
        <taxon>Shewanella</taxon>
    </lineage>
</organism>
<sequence>MAGRELSHLQQLEAESIQIIREVAAEFDNPVMLYSIGKDSSVMLHLARKAFYPGKIPFPLLHVDTGWKFKEMIAFRDAQAKKFGFELLTHTNPEGVAQGINPFDHGSAKHTDIMKTQGLKQALNQYGFDAAFGGARRDEEKSRAKERVYSFRDRHHRWDPKNQRPELWRTYNGAVNKGESIRVFPLSNWTELDIWQYIYQENIELVPLYFAAERPVVERGGQLIMADDERMKLEEGETIKHEVVRFRTLGCYPLTAAMHSQADNLEKIIEEMLLTRSSERQGRLIDSDQSASMEQKKRQGYF</sequence>
<reference key="1">
    <citation type="submission" date="2006-08" db="EMBL/GenBank/DDBJ databases">
        <title>Complete sequence of chromosome 1 of Shewanella sp. MR-7.</title>
        <authorList>
            <person name="Copeland A."/>
            <person name="Lucas S."/>
            <person name="Lapidus A."/>
            <person name="Barry K."/>
            <person name="Detter J.C."/>
            <person name="Glavina del Rio T."/>
            <person name="Hammon N."/>
            <person name="Israni S."/>
            <person name="Dalin E."/>
            <person name="Tice H."/>
            <person name="Pitluck S."/>
            <person name="Kiss H."/>
            <person name="Brettin T."/>
            <person name="Bruce D."/>
            <person name="Han C."/>
            <person name="Tapia R."/>
            <person name="Gilna P."/>
            <person name="Schmutz J."/>
            <person name="Larimer F."/>
            <person name="Land M."/>
            <person name="Hauser L."/>
            <person name="Kyrpides N."/>
            <person name="Mikhailova N."/>
            <person name="Nealson K."/>
            <person name="Konstantinidis K."/>
            <person name="Klappenbach J."/>
            <person name="Tiedje J."/>
            <person name="Richardson P."/>
        </authorList>
    </citation>
    <scope>NUCLEOTIDE SEQUENCE [LARGE SCALE GENOMIC DNA]</scope>
    <source>
        <strain>MR-7</strain>
    </source>
</reference>
<dbReference type="EC" id="2.7.7.4" evidence="1"/>
<dbReference type="EMBL" id="CP000444">
    <property type="protein sequence ID" value="ABI41899.1"/>
    <property type="molecule type" value="Genomic_DNA"/>
</dbReference>
<dbReference type="SMR" id="Q0HYA6"/>
<dbReference type="KEGG" id="shm:Shewmr7_0900"/>
<dbReference type="HOGENOM" id="CLU_043026_0_0_6"/>
<dbReference type="UniPathway" id="UPA00140">
    <property type="reaction ID" value="UER00204"/>
</dbReference>
<dbReference type="GO" id="GO:0005524">
    <property type="term" value="F:ATP binding"/>
    <property type="evidence" value="ECO:0007669"/>
    <property type="project" value="UniProtKB-KW"/>
</dbReference>
<dbReference type="GO" id="GO:0004781">
    <property type="term" value="F:sulfate adenylyltransferase (ATP) activity"/>
    <property type="evidence" value="ECO:0007669"/>
    <property type="project" value="UniProtKB-UniRule"/>
</dbReference>
<dbReference type="GO" id="GO:0070814">
    <property type="term" value="P:hydrogen sulfide biosynthetic process"/>
    <property type="evidence" value="ECO:0007669"/>
    <property type="project" value="UniProtKB-UniRule"/>
</dbReference>
<dbReference type="GO" id="GO:0000103">
    <property type="term" value="P:sulfate assimilation"/>
    <property type="evidence" value="ECO:0007669"/>
    <property type="project" value="UniProtKB-UniRule"/>
</dbReference>
<dbReference type="CDD" id="cd23946">
    <property type="entry name" value="Sulfate_adenylyltransferase_2"/>
    <property type="match status" value="1"/>
</dbReference>
<dbReference type="FunFam" id="3.40.50.620:FF:000002">
    <property type="entry name" value="Sulfate adenylyltransferase subunit 2"/>
    <property type="match status" value="1"/>
</dbReference>
<dbReference type="Gene3D" id="3.40.50.620">
    <property type="entry name" value="HUPs"/>
    <property type="match status" value="1"/>
</dbReference>
<dbReference type="HAMAP" id="MF_00064">
    <property type="entry name" value="Sulf_adenylyltr_sub2"/>
    <property type="match status" value="1"/>
</dbReference>
<dbReference type="InterPro" id="IPR002500">
    <property type="entry name" value="PAPS_reduct_dom"/>
</dbReference>
<dbReference type="InterPro" id="IPR014729">
    <property type="entry name" value="Rossmann-like_a/b/a_fold"/>
</dbReference>
<dbReference type="InterPro" id="IPR011784">
    <property type="entry name" value="SO4_adenylTrfase_ssu"/>
</dbReference>
<dbReference type="InterPro" id="IPR050128">
    <property type="entry name" value="Sulfate_adenylyltrnsfr_sub2"/>
</dbReference>
<dbReference type="NCBIfam" id="TIGR02039">
    <property type="entry name" value="CysD"/>
    <property type="match status" value="1"/>
</dbReference>
<dbReference type="NCBIfam" id="NF003587">
    <property type="entry name" value="PRK05253.1"/>
    <property type="match status" value="1"/>
</dbReference>
<dbReference type="NCBIfam" id="NF009214">
    <property type="entry name" value="PRK12563.1"/>
    <property type="match status" value="1"/>
</dbReference>
<dbReference type="PANTHER" id="PTHR43196">
    <property type="entry name" value="SULFATE ADENYLYLTRANSFERASE SUBUNIT 2"/>
    <property type="match status" value="1"/>
</dbReference>
<dbReference type="PANTHER" id="PTHR43196:SF1">
    <property type="entry name" value="SULFATE ADENYLYLTRANSFERASE SUBUNIT 2"/>
    <property type="match status" value="1"/>
</dbReference>
<dbReference type="Pfam" id="PF01507">
    <property type="entry name" value="PAPS_reduct"/>
    <property type="match status" value="1"/>
</dbReference>
<dbReference type="PIRSF" id="PIRSF002936">
    <property type="entry name" value="CysDAde_trans"/>
    <property type="match status" value="1"/>
</dbReference>
<dbReference type="SUPFAM" id="SSF52402">
    <property type="entry name" value="Adenine nucleotide alpha hydrolases-like"/>
    <property type="match status" value="1"/>
</dbReference>
<accession>Q0HYA6</accession>
<comment type="function">
    <text evidence="1">With CysN forms the ATP sulfurylase (ATPS) that catalyzes the adenylation of sulfate producing adenosine 5'-phosphosulfate (APS) and diphosphate, the first enzymatic step in sulfur assimilation pathway. APS synthesis involves the formation of a high-energy phosphoric-sulfuric acid anhydride bond driven by GTP hydrolysis by CysN coupled to ATP hydrolysis by CysD.</text>
</comment>
<comment type="catalytic activity">
    <reaction evidence="1">
        <text>sulfate + ATP + H(+) = adenosine 5'-phosphosulfate + diphosphate</text>
        <dbReference type="Rhea" id="RHEA:18133"/>
        <dbReference type="ChEBI" id="CHEBI:15378"/>
        <dbReference type="ChEBI" id="CHEBI:16189"/>
        <dbReference type="ChEBI" id="CHEBI:30616"/>
        <dbReference type="ChEBI" id="CHEBI:33019"/>
        <dbReference type="ChEBI" id="CHEBI:58243"/>
        <dbReference type="EC" id="2.7.7.4"/>
    </reaction>
</comment>
<comment type="pathway">
    <text evidence="1">Sulfur metabolism; hydrogen sulfide biosynthesis; sulfite from sulfate: step 1/3.</text>
</comment>
<comment type="subunit">
    <text evidence="1">Heterodimer composed of CysD, the smaller subunit, and CysN.</text>
</comment>
<comment type="similarity">
    <text evidence="1">Belongs to the PAPS reductase family. CysD subfamily.</text>
</comment>
<evidence type="ECO:0000255" key="1">
    <source>
        <dbReference type="HAMAP-Rule" id="MF_00064"/>
    </source>
</evidence>
<evidence type="ECO:0000256" key="2">
    <source>
        <dbReference type="SAM" id="MobiDB-lite"/>
    </source>
</evidence>
<keyword id="KW-0067">ATP-binding</keyword>
<keyword id="KW-0547">Nucleotide-binding</keyword>
<keyword id="KW-0548">Nucleotidyltransferase</keyword>
<keyword id="KW-0808">Transferase</keyword>
<name>CYSD_SHESR</name>
<gene>
    <name evidence="1" type="primary">cysD</name>
    <name type="ordered locus">Shewmr7_0900</name>
</gene>